<name>VE6_HPV12</name>
<protein>
    <recommendedName>
        <fullName evidence="1">Protein E6</fullName>
    </recommendedName>
</protein>
<proteinExistence type="inferred from homology"/>
<comment type="function">
    <text evidence="1">Plays a major role in the induction and maintenance of cellular transformation. E6 associates with host UBE3A/E6-AP ubiquitin-protein ligase and modulates its activity. Protects host keratinocytes from apoptosis by mediating the degradation of host BAK1. May also inhibit host immune response.</text>
</comment>
<comment type="subunit">
    <text evidence="1">Forms homodimers. Interacts with ubiquitin-protein ligase UBE3A/E6-AP; this interaction stimulates UBE3A ubiquitin activity. Interacts with host BAK1.</text>
</comment>
<comment type="subcellular location">
    <subcellularLocation>
        <location evidence="1">Host cytoplasm</location>
    </subcellularLocation>
    <subcellularLocation>
        <location evidence="1">Host nucleus</location>
    </subcellularLocation>
</comment>
<comment type="similarity">
    <text evidence="1 2">Belongs to the papillomaviridae E6 protein family.</text>
</comment>
<gene>
    <name evidence="1" type="primary">E6</name>
</gene>
<sequence length="157" mass="17984">MAQQADQQTVTDSTPELPTTIKELADLLDIPLVDCLVPCNFCGKFLDFLEVCDFDKKQLTLIWKGHFVTACCRSCCAATAIYEFNEFYQQTVLGRDIELATGKSIFDLKIRCQTCLSFLDTIEKLDSCGRGLPFHKVRDRWKGICRQCKHLYLNNDR</sequence>
<feature type="chain" id="PRO_0000133332" description="Protein E6">
    <location>
        <begin position="1"/>
        <end position="157"/>
    </location>
</feature>
<feature type="zinc finger region" evidence="1">
    <location>
        <begin position="39"/>
        <end position="75"/>
    </location>
</feature>
<feature type="zinc finger region" evidence="1">
    <location>
        <begin position="112"/>
        <end position="148"/>
    </location>
</feature>
<dbReference type="EMBL" id="X74466">
    <property type="protein sequence ID" value="CAA52496.1"/>
    <property type="molecule type" value="Genomic_DNA"/>
</dbReference>
<dbReference type="PIR" id="S36538">
    <property type="entry name" value="S36538"/>
</dbReference>
<dbReference type="SMR" id="P36803"/>
<dbReference type="Proteomes" id="UP000009106">
    <property type="component" value="Genome"/>
</dbReference>
<dbReference type="GO" id="GO:0030430">
    <property type="term" value="C:host cell cytoplasm"/>
    <property type="evidence" value="ECO:0007669"/>
    <property type="project" value="UniProtKB-SubCell"/>
</dbReference>
<dbReference type="GO" id="GO:0042025">
    <property type="term" value="C:host cell nucleus"/>
    <property type="evidence" value="ECO:0007669"/>
    <property type="project" value="UniProtKB-SubCell"/>
</dbReference>
<dbReference type="GO" id="GO:0003677">
    <property type="term" value="F:DNA binding"/>
    <property type="evidence" value="ECO:0007669"/>
    <property type="project" value="UniProtKB-UniRule"/>
</dbReference>
<dbReference type="GO" id="GO:0008270">
    <property type="term" value="F:zinc ion binding"/>
    <property type="evidence" value="ECO:0007669"/>
    <property type="project" value="UniProtKB-KW"/>
</dbReference>
<dbReference type="GO" id="GO:0006351">
    <property type="term" value="P:DNA-templated transcription"/>
    <property type="evidence" value="ECO:0007669"/>
    <property type="project" value="UniProtKB-UniRule"/>
</dbReference>
<dbReference type="GO" id="GO:0006355">
    <property type="term" value="P:regulation of DNA-templated transcription"/>
    <property type="evidence" value="ECO:0007669"/>
    <property type="project" value="UniProtKB-UniRule"/>
</dbReference>
<dbReference type="GO" id="GO:0052150">
    <property type="term" value="P:symbiont-mediated perturbation of host apoptosis"/>
    <property type="evidence" value="ECO:0007669"/>
    <property type="project" value="UniProtKB-KW"/>
</dbReference>
<dbReference type="GO" id="GO:0039648">
    <property type="term" value="P:symbiont-mediated perturbation of host ubiquitin-like protein modification"/>
    <property type="evidence" value="ECO:0007669"/>
    <property type="project" value="UniProtKB-UniRule"/>
</dbReference>
<dbReference type="GO" id="GO:0052170">
    <property type="term" value="P:symbiont-mediated suppression of host innate immune response"/>
    <property type="evidence" value="ECO:0007669"/>
    <property type="project" value="UniProtKB-KW"/>
</dbReference>
<dbReference type="GO" id="GO:0039502">
    <property type="term" value="P:symbiont-mediated suppression of host type I interferon-mediated signaling pathway"/>
    <property type="evidence" value="ECO:0007669"/>
    <property type="project" value="UniProtKB-UniRule"/>
</dbReference>
<dbReference type="Gene3D" id="3.30.240.40">
    <property type="entry name" value="E6 early regulatory protein"/>
    <property type="match status" value="2"/>
</dbReference>
<dbReference type="HAMAP" id="MF_04006">
    <property type="entry name" value="HPV_E6"/>
    <property type="match status" value="1"/>
</dbReference>
<dbReference type="InterPro" id="IPR001334">
    <property type="entry name" value="E6"/>
</dbReference>
<dbReference type="InterPro" id="IPR038575">
    <property type="entry name" value="E6_sf"/>
</dbReference>
<dbReference type="Pfam" id="PF00518">
    <property type="entry name" value="E6"/>
    <property type="match status" value="1"/>
</dbReference>
<dbReference type="SUPFAM" id="SSF161229">
    <property type="entry name" value="E6 C-terminal domain-like"/>
    <property type="match status" value="2"/>
</dbReference>
<evidence type="ECO:0000255" key="1">
    <source>
        <dbReference type="HAMAP-Rule" id="MF_04006"/>
    </source>
</evidence>
<evidence type="ECO:0000305" key="2"/>
<organismHost>
    <name type="scientific">Homo sapiens</name>
    <name type="common">Human</name>
    <dbReference type="NCBI Taxonomy" id="9606"/>
</organismHost>
<organism>
    <name type="scientific">Human papillomavirus 12</name>
    <dbReference type="NCBI Taxonomy" id="10604"/>
    <lineage>
        <taxon>Viruses</taxon>
        <taxon>Monodnaviria</taxon>
        <taxon>Shotokuvirae</taxon>
        <taxon>Cossaviricota</taxon>
        <taxon>Papovaviricetes</taxon>
        <taxon>Zurhausenvirales</taxon>
        <taxon>Papillomaviridae</taxon>
        <taxon>Firstpapillomavirinae</taxon>
        <taxon>Betapapillomavirus</taxon>
        <taxon>Betapapillomavirus 1</taxon>
    </lineage>
</organism>
<reference key="1">
    <citation type="journal article" date="1994" name="Curr. Top. Microbiol. Immunol.">
        <title>Primer-directed sequencing of human papillomavirus types.</title>
        <authorList>
            <person name="Delius H."/>
            <person name="Hofmann B."/>
        </authorList>
    </citation>
    <scope>NUCLEOTIDE SEQUENCE [GENOMIC DNA]</scope>
</reference>
<keyword id="KW-0010">Activator</keyword>
<keyword id="KW-0238">DNA-binding</keyword>
<keyword id="KW-0244">Early protein</keyword>
<keyword id="KW-1035">Host cytoplasm</keyword>
<keyword id="KW-1048">Host nucleus</keyword>
<keyword id="KW-0945">Host-virus interaction</keyword>
<keyword id="KW-1090">Inhibition of host innate immune response by virus</keyword>
<keyword id="KW-0479">Metal-binding</keyword>
<keyword id="KW-1119">Modulation of host cell apoptosis by virus</keyword>
<keyword id="KW-0804">Transcription</keyword>
<keyword id="KW-0805">Transcription regulation</keyword>
<keyword id="KW-0899">Viral immunoevasion</keyword>
<keyword id="KW-0862">Zinc</keyword>
<keyword id="KW-0863">Zinc-finger</keyword>
<accession>P36803</accession>